<accession>Q741J6</accession>
<protein>
    <recommendedName>
        <fullName evidence="1">3-dehydroquinate dehydratase</fullName>
        <shortName evidence="1">3-dehydroquinase</shortName>
        <ecNumber evidence="1">4.2.1.10</ecNumber>
    </recommendedName>
    <alternativeName>
        <fullName evidence="1">Type II DHQase</fullName>
    </alternativeName>
</protein>
<proteinExistence type="inferred from homology"/>
<reference key="1">
    <citation type="journal article" date="2005" name="Proc. Natl. Acad. Sci. U.S.A.">
        <title>The complete genome sequence of Mycobacterium avium subspecies paratuberculosis.</title>
        <authorList>
            <person name="Li L."/>
            <person name="Bannantine J.P."/>
            <person name="Zhang Q."/>
            <person name="Amonsin A."/>
            <person name="May B.J."/>
            <person name="Alt D."/>
            <person name="Banerji N."/>
            <person name="Kanjilal S."/>
            <person name="Kapur V."/>
        </authorList>
    </citation>
    <scope>NUCLEOTIDE SEQUENCE [LARGE SCALE GENOMIC DNA]</scope>
    <source>
        <strain>ATCC BAA-968 / K-10</strain>
    </source>
</reference>
<sequence length="143" mass="15192">MIVQVINGPNLGRLGRREPDVYGDTTHDQLAALIEAEAAALGLKAIVRQSDSEAELLDWIHGAADANQPVILNAGGLTHTSVALRDACAELSAPLIEVHISNVHAREEFRRHSYLSPVATGAIVGLGVQGYLLALRYLAGRPA</sequence>
<dbReference type="EC" id="4.2.1.10" evidence="1"/>
<dbReference type="EMBL" id="AE016958">
    <property type="protein sequence ID" value="AAS03411.1"/>
    <property type="molecule type" value="Genomic_DNA"/>
</dbReference>
<dbReference type="RefSeq" id="WP_003877610.1">
    <property type="nucleotide sequence ID" value="NZ_CP106873.1"/>
</dbReference>
<dbReference type="SMR" id="Q741J6"/>
<dbReference type="STRING" id="262316.MAP_1094"/>
<dbReference type="KEGG" id="mpa:MAP_1094"/>
<dbReference type="PATRIC" id="fig|262316.17.peg.1152"/>
<dbReference type="eggNOG" id="COG0757">
    <property type="taxonomic scope" value="Bacteria"/>
</dbReference>
<dbReference type="HOGENOM" id="CLU_090968_1_0_11"/>
<dbReference type="UniPathway" id="UPA00053">
    <property type="reaction ID" value="UER00086"/>
</dbReference>
<dbReference type="Proteomes" id="UP000000580">
    <property type="component" value="Chromosome"/>
</dbReference>
<dbReference type="GO" id="GO:0003855">
    <property type="term" value="F:3-dehydroquinate dehydratase activity"/>
    <property type="evidence" value="ECO:0007669"/>
    <property type="project" value="UniProtKB-UniRule"/>
</dbReference>
<dbReference type="GO" id="GO:0008652">
    <property type="term" value="P:amino acid biosynthetic process"/>
    <property type="evidence" value="ECO:0007669"/>
    <property type="project" value="UniProtKB-KW"/>
</dbReference>
<dbReference type="GO" id="GO:0009073">
    <property type="term" value="P:aromatic amino acid family biosynthetic process"/>
    <property type="evidence" value="ECO:0007669"/>
    <property type="project" value="UniProtKB-KW"/>
</dbReference>
<dbReference type="GO" id="GO:0009423">
    <property type="term" value="P:chorismate biosynthetic process"/>
    <property type="evidence" value="ECO:0007669"/>
    <property type="project" value="UniProtKB-UniRule"/>
</dbReference>
<dbReference type="GO" id="GO:0019631">
    <property type="term" value="P:quinate catabolic process"/>
    <property type="evidence" value="ECO:0007669"/>
    <property type="project" value="TreeGrafter"/>
</dbReference>
<dbReference type="CDD" id="cd00466">
    <property type="entry name" value="DHQase_II"/>
    <property type="match status" value="1"/>
</dbReference>
<dbReference type="FunFam" id="3.40.50.9100:FF:000001">
    <property type="entry name" value="3-dehydroquinate dehydratase"/>
    <property type="match status" value="1"/>
</dbReference>
<dbReference type="Gene3D" id="3.40.50.9100">
    <property type="entry name" value="Dehydroquinase, class II"/>
    <property type="match status" value="1"/>
</dbReference>
<dbReference type="HAMAP" id="MF_00169">
    <property type="entry name" value="AroQ"/>
    <property type="match status" value="1"/>
</dbReference>
<dbReference type="InterPro" id="IPR001874">
    <property type="entry name" value="DHquinase_II"/>
</dbReference>
<dbReference type="InterPro" id="IPR018509">
    <property type="entry name" value="DHquinase_II_CS"/>
</dbReference>
<dbReference type="InterPro" id="IPR036441">
    <property type="entry name" value="DHquinase_II_sf"/>
</dbReference>
<dbReference type="NCBIfam" id="TIGR01088">
    <property type="entry name" value="aroQ"/>
    <property type="match status" value="1"/>
</dbReference>
<dbReference type="NCBIfam" id="NF003805">
    <property type="entry name" value="PRK05395.1-2"/>
    <property type="match status" value="1"/>
</dbReference>
<dbReference type="NCBIfam" id="NF003806">
    <property type="entry name" value="PRK05395.1-3"/>
    <property type="match status" value="1"/>
</dbReference>
<dbReference type="NCBIfam" id="NF003807">
    <property type="entry name" value="PRK05395.1-4"/>
    <property type="match status" value="1"/>
</dbReference>
<dbReference type="PANTHER" id="PTHR21272">
    <property type="entry name" value="CATABOLIC 3-DEHYDROQUINASE"/>
    <property type="match status" value="1"/>
</dbReference>
<dbReference type="PANTHER" id="PTHR21272:SF3">
    <property type="entry name" value="CATABOLIC 3-DEHYDROQUINASE"/>
    <property type="match status" value="1"/>
</dbReference>
<dbReference type="Pfam" id="PF01220">
    <property type="entry name" value="DHquinase_II"/>
    <property type="match status" value="1"/>
</dbReference>
<dbReference type="PIRSF" id="PIRSF001399">
    <property type="entry name" value="DHquinase_II"/>
    <property type="match status" value="1"/>
</dbReference>
<dbReference type="SUPFAM" id="SSF52304">
    <property type="entry name" value="Type II 3-dehydroquinate dehydratase"/>
    <property type="match status" value="1"/>
</dbReference>
<dbReference type="PROSITE" id="PS01029">
    <property type="entry name" value="DEHYDROQUINASE_II"/>
    <property type="match status" value="1"/>
</dbReference>
<keyword id="KW-0028">Amino-acid biosynthesis</keyword>
<keyword id="KW-0057">Aromatic amino acid biosynthesis</keyword>
<keyword id="KW-0456">Lyase</keyword>
<keyword id="KW-1185">Reference proteome</keyword>
<gene>
    <name evidence="1" type="primary">aroQ</name>
    <name type="synonym">aroD</name>
    <name type="ordered locus">MAP_1094</name>
</gene>
<organism>
    <name type="scientific">Mycolicibacterium paratuberculosis (strain ATCC BAA-968 / K-10)</name>
    <name type="common">Mycobacterium paratuberculosis</name>
    <dbReference type="NCBI Taxonomy" id="262316"/>
    <lineage>
        <taxon>Bacteria</taxon>
        <taxon>Bacillati</taxon>
        <taxon>Actinomycetota</taxon>
        <taxon>Actinomycetes</taxon>
        <taxon>Mycobacteriales</taxon>
        <taxon>Mycobacteriaceae</taxon>
        <taxon>Mycobacterium</taxon>
        <taxon>Mycobacterium avium complex (MAC)</taxon>
    </lineage>
</organism>
<evidence type="ECO:0000255" key="1">
    <source>
        <dbReference type="HAMAP-Rule" id="MF_00169"/>
    </source>
</evidence>
<comment type="function">
    <text evidence="1">Catalyzes a trans-dehydration via an enolate intermediate.</text>
</comment>
<comment type="catalytic activity">
    <reaction evidence="1">
        <text>3-dehydroquinate = 3-dehydroshikimate + H2O</text>
        <dbReference type="Rhea" id="RHEA:21096"/>
        <dbReference type="ChEBI" id="CHEBI:15377"/>
        <dbReference type="ChEBI" id="CHEBI:16630"/>
        <dbReference type="ChEBI" id="CHEBI:32364"/>
        <dbReference type="EC" id="4.2.1.10"/>
    </reaction>
</comment>
<comment type="pathway">
    <text evidence="1">Metabolic intermediate biosynthesis; chorismate biosynthesis; chorismate from D-erythrose 4-phosphate and phosphoenolpyruvate: step 3/7.</text>
</comment>
<comment type="subunit">
    <text evidence="1">Homododecamer.</text>
</comment>
<comment type="similarity">
    <text evidence="1">Belongs to the type-II 3-dehydroquinase family.</text>
</comment>
<feature type="chain" id="PRO_0000159909" description="3-dehydroquinate dehydratase">
    <location>
        <begin position="1"/>
        <end position="143"/>
    </location>
</feature>
<feature type="active site" description="Proton acceptor" evidence="1">
    <location>
        <position position="22"/>
    </location>
</feature>
<feature type="active site" description="Proton donor" evidence="1">
    <location>
        <position position="99"/>
    </location>
</feature>
<feature type="binding site" evidence="1">
    <location>
        <position position="73"/>
    </location>
    <ligand>
        <name>substrate</name>
    </ligand>
</feature>
<feature type="binding site" evidence="1">
    <location>
        <position position="79"/>
    </location>
    <ligand>
        <name>substrate</name>
    </ligand>
</feature>
<feature type="binding site" evidence="1">
    <location>
        <position position="86"/>
    </location>
    <ligand>
        <name>substrate</name>
    </ligand>
</feature>
<feature type="binding site" evidence="1">
    <location>
        <begin position="100"/>
        <end position="101"/>
    </location>
    <ligand>
        <name>substrate</name>
    </ligand>
</feature>
<feature type="binding site" evidence="1">
    <location>
        <position position="110"/>
    </location>
    <ligand>
        <name>substrate</name>
    </ligand>
</feature>
<feature type="site" description="Transition state stabilizer" evidence="1">
    <location>
        <position position="17"/>
    </location>
</feature>
<name>AROQ_MYCPA</name>